<protein>
    <recommendedName>
        <fullName evidence="1">UPF0756 membrane protein KPN78578_11500</fullName>
    </recommendedName>
</protein>
<proteinExistence type="inferred from homology"/>
<organism>
    <name type="scientific">Klebsiella pneumoniae subsp. pneumoniae (strain ATCC 700721 / MGH 78578)</name>
    <dbReference type="NCBI Taxonomy" id="272620"/>
    <lineage>
        <taxon>Bacteria</taxon>
        <taxon>Pseudomonadati</taxon>
        <taxon>Pseudomonadota</taxon>
        <taxon>Gammaproteobacteria</taxon>
        <taxon>Enterobacterales</taxon>
        <taxon>Enterobacteriaceae</taxon>
        <taxon>Klebsiella/Raoultella group</taxon>
        <taxon>Klebsiella</taxon>
        <taxon>Klebsiella pneumoniae complex</taxon>
    </lineage>
</organism>
<accession>A6T7P0</accession>
<feature type="chain" id="PRO_0000388890" description="UPF0756 membrane protein KPN78578_11500">
    <location>
        <begin position="1"/>
        <end position="148"/>
    </location>
</feature>
<feature type="transmembrane region" description="Helical" evidence="1">
    <location>
        <begin position="14"/>
        <end position="34"/>
    </location>
</feature>
<feature type="transmembrane region" description="Helical" evidence="1">
    <location>
        <begin position="51"/>
        <end position="71"/>
    </location>
</feature>
<feature type="transmembrane region" description="Helical" evidence="1">
    <location>
        <begin position="86"/>
        <end position="106"/>
    </location>
</feature>
<feature type="transmembrane region" description="Helical" evidence="1">
    <location>
        <begin position="121"/>
        <end position="141"/>
    </location>
</feature>
<dbReference type="EMBL" id="CP000647">
    <property type="protein sequence ID" value="ABR76611.1"/>
    <property type="molecule type" value="Genomic_DNA"/>
</dbReference>
<dbReference type="RefSeq" id="WP_002901080.1">
    <property type="nucleotide sequence ID" value="NC_009648.1"/>
</dbReference>
<dbReference type="STRING" id="272620.KPN_01178"/>
<dbReference type="PaxDb" id="272620-KPN_01178"/>
<dbReference type="EnsemblBacteria" id="ABR76611">
    <property type="protein sequence ID" value="ABR76611"/>
    <property type="gene ID" value="KPN_01178"/>
</dbReference>
<dbReference type="KEGG" id="kpn:KPN_01178"/>
<dbReference type="HOGENOM" id="CLU_125889_0_0_6"/>
<dbReference type="Proteomes" id="UP000000265">
    <property type="component" value="Chromosome"/>
</dbReference>
<dbReference type="GO" id="GO:0005886">
    <property type="term" value="C:plasma membrane"/>
    <property type="evidence" value="ECO:0007669"/>
    <property type="project" value="UniProtKB-SubCell"/>
</dbReference>
<dbReference type="HAMAP" id="MF_01874">
    <property type="entry name" value="UPF0756"/>
    <property type="match status" value="1"/>
</dbReference>
<dbReference type="InterPro" id="IPR007382">
    <property type="entry name" value="UPF0756_TM"/>
</dbReference>
<dbReference type="PANTHER" id="PTHR38452">
    <property type="entry name" value="UPF0756 MEMBRANE PROTEIN YEAL"/>
    <property type="match status" value="1"/>
</dbReference>
<dbReference type="PANTHER" id="PTHR38452:SF1">
    <property type="entry name" value="UPF0756 MEMBRANE PROTEIN YEAL"/>
    <property type="match status" value="1"/>
</dbReference>
<dbReference type="Pfam" id="PF04284">
    <property type="entry name" value="DUF441"/>
    <property type="match status" value="1"/>
</dbReference>
<name>Y1150_KLEP7</name>
<evidence type="ECO:0000255" key="1">
    <source>
        <dbReference type="HAMAP-Rule" id="MF_01874"/>
    </source>
</evidence>
<sequence>MFDTTLLILLGLAALGFISHNTTVAISILVLIIVRVTPLNAFFPWVEKQGLTVGIIILTIGVMAPIASGTLPPSTLIHSFMNWKSLLAIAVGVFVSWLGGRGVSLMGSQPHLVAGLLVGTVLGVALFRGVPVGPLIAAGIISLFIGKS</sequence>
<keyword id="KW-1003">Cell membrane</keyword>
<keyword id="KW-0472">Membrane</keyword>
<keyword id="KW-0812">Transmembrane</keyword>
<keyword id="KW-1133">Transmembrane helix</keyword>
<gene>
    <name type="ordered locus">KPN78578_11500</name>
    <name type="ORF">KPN_01178</name>
</gene>
<comment type="subcellular location">
    <subcellularLocation>
        <location evidence="1">Cell membrane</location>
        <topology evidence="1">Multi-pass membrane protein</topology>
    </subcellularLocation>
</comment>
<comment type="similarity">
    <text evidence="1">Belongs to the UPF0756 family.</text>
</comment>
<reference key="1">
    <citation type="submission" date="2006-09" db="EMBL/GenBank/DDBJ databases">
        <authorList>
            <consortium name="The Klebsiella pneumonia Genome Sequencing Project"/>
            <person name="McClelland M."/>
            <person name="Sanderson E.K."/>
            <person name="Spieth J."/>
            <person name="Clifton W.S."/>
            <person name="Latreille P."/>
            <person name="Sabo A."/>
            <person name="Pepin K."/>
            <person name="Bhonagiri V."/>
            <person name="Porwollik S."/>
            <person name="Ali J."/>
            <person name="Wilson R.K."/>
        </authorList>
    </citation>
    <scope>NUCLEOTIDE SEQUENCE [LARGE SCALE GENOMIC DNA]</scope>
    <source>
        <strain>ATCC 700721 / MGH 78578</strain>
    </source>
</reference>